<dbReference type="EMBL" id="AL590449">
    <property type="protein sequence ID" value="CAD25743.1"/>
    <property type="molecule type" value="Genomic_DNA"/>
</dbReference>
<dbReference type="RefSeq" id="NP_586139.1">
    <property type="nucleotide sequence ID" value="NM_001041972.1"/>
</dbReference>
<dbReference type="SMR" id="Q8SR76"/>
<dbReference type="FunCoup" id="Q8SR76">
    <property type="interactions" value="309"/>
</dbReference>
<dbReference type="STRING" id="284813.Q8SR76"/>
<dbReference type="GeneID" id="859787"/>
<dbReference type="KEGG" id="ecu:ECU10_0240"/>
<dbReference type="VEuPathDB" id="MicrosporidiaDB:ECU10_0240"/>
<dbReference type="HOGENOM" id="CLU_008891_7_3_1"/>
<dbReference type="InParanoid" id="Q8SR76"/>
<dbReference type="OMA" id="CGGSTIR"/>
<dbReference type="OrthoDB" id="10248520at2759"/>
<dbReference type="Proteomes" id="UP000000819">
    <property type="component" value="Chromosome X"/>
</dbReference>
<dbReference type="GO" id="GO:0005832">
    <property type="term" value="C:chaperonin-containing T-complex"/>
    <property type="evidence" value="ECO:0007669"/>
    <property type="project" value="UniProtKB-ARBA"/>
</dbReference>
<dbReference type="GO" id="GO:0005524">
    <property type="term" value="F:ATP binding"/>
    <property type="evidence" value="ECO:0007669"/>
    <property type="project" value="UniProtKB-KW"/>
</dbReference>
<dbReference type="GO" id="GO:0016887">
    <property type="term" value="F:ATP hydrolysis activity"/>
    <property type="evidence" value="ECO:0007669"/>
    <property type="project" value="InterPro"/>
</dbReference>
<dbReference type="GO" id="GO:0140662">
    <property type="term" value="F:ATP-dependent protein folding chaperone"/>
    <property type="evidence" value="ECO:0007669"/>
    <property type="project" value="InterPro"/>
</dbReference>
<dbReference type="GO" id="GO:0051082">
    <property type="term" value="F:unfolded protein binding"/>
    <property type="evidence" value="ECO:0007669"/>
    <property type="project" value="InterPro"/>
</dbReference>
<dbReference type="CDD" id="cd03337">
    <property type="entry name" value="TCP1_gamma"/>
    <property type="match status" value="1"/>
</dbReference>
<dbReference type="FunFam" id="3.50.7.10:FF:000005">
    <property type="entry name" value="T-complex protein 1 subunit gamma"/>
    <property type="match status" value="1"/>
</dbReference>
<dbReference type="Gene3D" id="3.50.7.10">
    <property type="entry name" value="GroEL"/>
    <property type="match status" value="1"/>
</dbReference>
<dbReference type="Gene3D" id="1.10.560.10">
    <property type="entry name" value="GroEL-like equatorial domain"/>
    <property type="match status" value="1"/>
</dbReference>
<dbReference type="Gene3D" id="3.30.260.10">
    <property type="entry name" value="TCP-1-like chaperonin intermediate domain"/>
    <property type="match status" value="1"/>
</dbReference>
<dbReference type="InterPro" id="IPR012719">
    <property type="entry name" value="Chap_CCT_gamma"/>
</dbReference>
<dbReference type="InterPro" id="IPR017998">
    <property type="entry name" value="Chaperone_TCP-1"/>
</dbReference>
<dbReference type="InterPro" id="IPR002194">
    <property type="entry name" value="Chaperonin_TCP-1_CS"/>
</dbReference>
<dbReference type="InterPro" id="IPR002423">
    <property type="entry name" value="Cpn60/GroEL/TCP-1"/>
</dbReference>
<dbReference type="InterPro" id="IPR027409">
    <property type="entry name" value="GroEL-like_apical_dom_sf"/>
</dbReference>
<dbReference type="InterPro" id="IPR027413">
    <property type="entry name" value="GROEL-like_equatorial_sf"/>
</dbReference>
<dbReference type="InterPro" id="IPR027410">
    <property type="entry name" value="TCP-1-like_intermed_sf"/>
</dbReference>
<dbReference type="NCBIfam" id="TIGR02344">
    <property type="entry name" value="chap_CCT_gamma"/>
    <property type="match status" value="1"/>
</dbReference>
<dbReference type="PANTHER" id="PTHR11353">
    <property type="entry name" value="CHAPERONIN"/>
    <property type="match status" value="1"/>
</dbReference>
<dbReference type="Pfam" id="PF00118">
    <property type="entry name" value="Cpn60_TCP1"/>
    <property type="match status" value="1"/>
</dbReference>
<dbReference type="PRINTS" id="PR00304">
    <property type="entry name" value="TCOMPLEXTCP1"/>
</dbReference>
<dbReference type="SUPFAM" id="SSF52029">
    <property type="entry name" value="GroEL apical domain-like"/>
    <property type="match status" value="1"/>
</dbReference>
<dbReference type="SUPFAM" id="SSF48592">
    <property type="entry name" value="GroEL equatorial domain-like"/>
    <property type="match status" value="1"/>
</dbReference>
<dbReference type="SUPFAM" id="SSF54849">
    <property type="entry name" value="GroEL-intermediate domain like"/>
    <property type="match status" value="1"/>
</dbReference>
<dbReference type="PROSITE" id="PS00750">
    <property type="entry name" value="TCP1_1"/>
    <property type="match status" value="1"/>
</dbReference>
<dbReference type="PROSITE" id="PS00751">
    <property type="entry name" value="TCP1_2"/>
    <property type="match status" value="1"/>
</dbReference>
<dbReference type="PROSITE" id="PS00995">
    <property type="entry name" value="TCP1_3"/>
    <property type="match status" value="1"/>
</dbReference>
<accession>Q8SR76</accession>
<gene>
    <name type="primary">CCT3</name>
    <name type="ordered locus">ECU10_0240</name>
</gene>
<evidence type="ECO:0000250" key="1"/>
<evidence type="ECO:0000269" key="2">
    <source>
    </source>
</evidence>
<evidence type="ECO:0000305" key="3"/>
<organism>
    <name type="scientific">Encephalitozoon cuniculi (strain GB-M1)</name>
    <name type="common">Microsporidian parasite</name>
    <dbReference type="NCBI Taxonomy" id="284813"/>
    <lineage>
        <taxon>Eukaryota</taxon>
        <taxon>Fungi</taxon>
        <taxon>Fungi incertae sedis</taxon>
        <taxon>Microsporidia</taxon>
        <taxon>Unikaryonidae</taxon>
        <taxon>Encephalitozoon</taxon>
    </lineage>
</organism>
<feature type="chain" id="PRO_0000379506" description="T-complex protein 1 subunit gamma">
    <location>
        <begin position="1"/>
        <end position="519"/>
    </location>
</feature>
<proteinExistence type="evidence at protein level"/>
<reference key="1">
    <citation type="journal article" date="2001" name="Nature">
        <title>Genome sequence and gene compaction of the eukaryote parasite Encephalitozoon cuniculi.</title>
        <authorList>
            <person name="Katinka M.D."/>
            <person name="Duprat S."/>
            <person name="Cornillot E."/>
            <person name="Metenier G."/>
            <person name="Thomarat F."/>
            <person name="Prensier G."/>
            <person name="Barbe V."/>
            <person name="Peyretaillade E."/>
            <person name="Brottier P."/>
            <person name="Wincker P."/>
            <person name="Delbac F."/>
            <person name="El Alaoui H."/>
            <person name="Peyret P."/>
            <person name="Saurin W."/>
            <person name="Gouy M."/>
            <person name="Weissenbach J."/>
            <person name="Vivares C.P."/>
        </authorList>
    </citation>
    <scope>NUCLEOTIDE SEQUENCE [LARGE SCALE GENOMIC DNA]</scope>
    <source>
        <strain>GB-M1</strain>
    </source>
</reference>
<reference key="2">
    <citation type="journal article" date="2006" name="Proteomics">
        <title>Proteomic analysis of the eukaryotic parasite Encephalitozoon cuniculi (microsporidia): a reference map for proteins expressed in late sporogonial stages.</title>
        <authorList>
            <person name="Brosson D."/>
            <person name="Kuhn L."/>
            <person name="Delbac F."/>
            <person name="Garin J."/>
            <person name="Vivares C.P."/>
            <person name="Texier C."/>
        </authorList>
    </citation>
    <scope>IDENTIFICATION BY MASS SPECTROMETRY [LARGE SCALE ANALYSIS]</scope>
    <scope>DEVELOPMENTAL STAGE</scope>
</reference>
<name>TCPG_ENCCU</name>
<keyword id="KW-0067">ATP-binding</keyword>
<keyword id="KW-0143">Chaperone</keyword>
<keyword id="KW-0963">Cytoplasm</keyword>
<keyword id="KW-0547">Nucleotide-binding</keyword>
<keyword id="KW-1185">Reference proteome</keyword>
<comment type="function">
    <text evidence="1">Molecular chaperone; assists the folding of proteins upon ATP hydrolysis.</text>
</comment>
<comment type="subunit">
    <text evidence="1">Component of the T-complex protein 1 (TCP1) complex.</text>
</comment>
<comment type="subcellular location">
    <subcellularLocation>
        <location evidence="1">Cytoplasm</location>
    </subcellularLocation>
</comment>
<comment type="developmental stage">
    <text evidence="2">Expressed in late sporogonial stages.</text>
</comment>
<comment type="similarity">
    <text evidence="3">Belongs to the TCP-1 chaperonin family.</text>
</comment>
<protein>
    <recommendedName>
        <fullName>T-complex protein 1 subunit gamma</fullName>
        <shortName>TCP-1-gamma</shortName>
    </recommendedName>
    <alternativeName>
        <fullName>CCT-gamma</fullName>
    </alternativeName>
</protein>
<sequence length="519" mass="57442">MQKPIPRKMYILVPDKPAQIQNESAIAAKTISSVIRTCLGPRAMQKMVLTKINSIELTNDGNAILRELDVAHPSARSLIELAKTQDDEVGDGTTSVVLLAAEILNEMTYILDRDVHPIRICKALGRALEICIKAIDGAAISLDSNEETKIKIINGSVASKICNILKVPIGNLALEAVKKVYVKEENKCDLKNNMKVEKVLGGNLMESEVVDGVLINKDIIHPQMRRVIENPRIVIIESPLEYKKGESQTNYEFSKENDFTRALEIEEEQVREMCERIIGVRPDIVVCEKGISDLALSILFENNITGLRRLKKTDISRLSKVCGARSVSRPEDLEERHVGVSCGLFEYIKYGEEYYCKFSRCAHPKACSVVIRGPTKDILDELERNFMDAVKVAKSIFISPKLCPGGGAAEMAMAHELMQSAGDNEVEAEVFSRMASALTIIPSILLENSGVFNPLEAITLLEQKHKEGSFYGVNGTTGEIVDTRDLVLEPYAVKSQCIKSAVEAVSQLLRIDGIIESKR</sequence>